<protein>
    <recommendedName>
        <fullName evidence="1">Small ribosomal subunit protein uS11c</fullName>
    </recommendedName>
    <alternativeName>
        <fullName evidence="2">30S ribosomal protein S11, chloroplastic</fullName>
    </alternativeName>
</protein>
<accession>B2Y1Z2</accession>
<accession>B7ZI16</accession>
<proteinExistence type="inferred from homology"/>
<evidence type="ECO:0000255" key="1">
    <source>
        <dbReference type="HAMAP-Rule" id="MF_01310"/>
    </source>
</evidence>
<evidence type="ECO:0000305" key="2"/>
<keyword id="KW-0150">Chloroplast</keyword>
<keyword id="KW-0934">Plastid</keyword>
<keyword id="KW-0687">Ribonucleoprotein</keyword>
<keyword id="KW-0689">Ribosomal protein</keyword>
<keyword id="KW-0694">RNA-binding</keyword>
<keyword id="KW-0699">rRNA-binding</keyword>
<sequence length="142" mass="16079">MKPRLLNSFRGYRYRYRYRYGYRRKKPEIRNIDKGIIHILASFNNTIITVTDVKGHVIYWSSAGACGFKGPKKGSAFAAQKATESVIYRVVIKRAAVLITGCGKGRDAALRVIQHNRIPIRAVVDITPNPHNGCRPPAKRRV</sequence>
<comment type="subunit">
    <text evidence="1">Part of the 30S ribosomal subunit.</text>
</comment>
<comment type="subcellular location">
    <subcellularLocation>
        <location>Plastid</location>
        <location>Chloroplast</location>
    </subcellularLocation>
</comment>
<comment type="similarity">
    <text evidence="1">Belongs to the universal ribosomal protein uS11 family.</text>
</comment>
<comment type="sequence caution" evidence="2">
    <conflict type="erroneous initiation">
        <sequence resource="EMBL-CDS" id="BAH11196"/>
    </conflict>
</comment>
<organism>
    <name type="scientific">Welwitschia mirabilis</name>
    <name type="common">Tree tumbo</name>
    <name type="synonym">Welwitschia bainesii</name>
    <dbReference type="NCBI Taxonomy" id="3377"/>
    <lineage>
        <taxon>Eukaryota</taxon>
        <taxon>Viridiplantae</taxon>
        <taxon>Streptophyta</taxon>
        <taxon>Embryophyta</taxon>
        <taxon>Tracheophyta</taxon>
        <taxon>Spermatophyta</taxon>
        <taxon>Gnetopsida</taxon>
        <taxon>Gnetidae</taxon>
        <taxon>Welwitschiales</taxon>
        <taxon>Welwitschiaceae</taxon>
        <taxon>Welwitschia</taxon>
    </lineage>
</organism>
<name>RR11_WELMI</name>
<dbReference type="EMBL" id="EU342371">
    <property type="protein sequence ID" value="ABY26822.1"/>
    <property type="molecule type" value="Genomic_DNA"/>
</dbReference>
<dbReference type="EMBL" id="AP009568">
    <property type="protein sequence ID" value="BAH11196.1"/>
    <property type="status" value="ALT_INIT"/>
    <property type="molecule type" value="Genomic_DNA"/>
</dbReference>
<dbReference type="RefSeq" id="YP_001876609.1">
    <property type="nucleotide sequence ID" value="NC_010654.1"/>
</dbReference>
<dbReference type="SMR" id="B2Y1Z2"/>
<dbReference type="GeneID" id="6276160"/>
<dbReference type="GO" id="GO:0009507">
    <property type="term" value="C:chloroplast"/>
    <property type="evidence" value="ECO:0007669"/>
    <property type="project" value="UniProtKB-SubCell"/>
</dbReference>
<dbReference type="GO" id="GO:1990904">
    <property type="term" value="C:ribonucleoprotein complex"/>
    <property type="evidence" value="ECO:0007669"/>
    <property type="project" value="UniProtKB-KW"/>
</dbReference>
<dbReference type="GO" id="GO:0005840">
    <property type="term" value="C:ribosome"/>
    <property type="evidence" value="ECO:0007669"/>
    <property type="project" value="UniProtKB-KW"/>
</dbReference>
<dbReference type="GO" id="GO:0019843">
    <property type="term" value="F:rRNA binding"/>
    <property type="evidence" value="ECO:0007669"/>
    <property type="project" value="UniProtKB-UniRule"/>
</dbReference>
<dbReference type="GO" id="GO:0003735">
    <property type="term" value="F:structural constituent of ribosome"/>
    <property type="evidence" value="ECO:0007669"/>
    <property type="project" value="InterPro"/>
</dbReference>
<dbReference type="GO" id="GO:0006412">
    <property type="term" value="P:translation"/>
    <property type="evidence" value="ECO:0007669"/>
    <property type="project" value="UniProtKB-UniRule"/>
</dbReference>
<dbReference type="Gene3D" id="3.30.420.80">
    <property type="entry name" value="Ribosomal protein S11"/>
    <property type="match status" value="1"/>
</dbReference>
<dbReference type="HAMAP" id="MF_01310">
    <property type="entry name" value="Ribosomal_uS11"/>
    <property type="match status" value="1"/>
</dbReference>
<dbReference type="InterPro" id="IPR001971">
    <property type="entry name" value="Ribosomal_uS11"/>
</dbReference>
<dbReference type="InterPro" id="IPR036967">
    <property type="entry name" value="Ribosomal_uS11_sf"/>
</dbReference>
<dbReference type="NCBIfam" id="NF003698">
    <property type="entry name" value="PRK05309.1"/>
    <property type="match status" value="1"/>
</dbReference>
<dbReference type="PANTHER" id="PTHR11759">
    <property type="entry name" value="40S RIBOSOMAL PROTEIN S14/30S RIBOSOMAL PROTEIN S11"/>
    <property type="match status" value="1"/>
</dbReference>
<dbReference type="Pfam" id="PF00411">
    <property type="entry name" value="Ribosomal_S11"/>
    <property type="match status" value="1"/>
</dbReference>
<dbReference type="PIRSF" id="PIRSF002131">
    <property type="entry name" value="Ribosomal_S11"/>
    <property type="match status" value="1"/>
</dbReference>
<dbReference type="SUPFAM" id="SSF53137">
    <property type="entry name" value="Translational machinery components"/>
    <property type="match status" value="1"/>
</dbReference>
<reference key="1">
    <citation type="journal article" date="2008" name="BMC Evol. Biol.">
        <title>The complete plastid genome sequence of Welwitschia mirabilis: an unusually compact plastome with accelerated divergence rates.</title>
        <authorList>
            <person name="McCoy S.R."/>
            <person name="Kuehl J.V."/>
            <person name="Boore J.L."/>
            <person name="Raubeson L.A."/>
        </authorList>
    </citation>
    <scope>NUCLEOTIDE SEQUENCE [LARGE SCALE GENOMIC DNA]</scope>
</reference>
<reference key="2">
    <citation type="journal article" date="2009" name="Mol. Phylogenet. Evol.">
        <title>Evolution of reduced and compact chloroplast genomes (cpDNAs) in gnetophytes: Selection toward a lower-cost strategy.</title>
        <authorList>
            <person name="Wu C.-S."/>
            <person name="Lai Y.-T."/>
            <person name="Lin C.-P."/>
            <person name="Wang Y.-N."/>
            <person name="Chaw S.-M."/>
        </authorList>
    </citation>
    <scope>NUCLEOTIDE SEQUENCE [LARGE SCALE GENOMIC DNA]</scope>
</reference>
<gene>
    <name evidence="1" type="primary">rps11</name>
</gene>
<feature type="chain" id="PRO_0000364222" description="Small ribosomal subunit protein uS11c">
    <location>
        <begin position="1"/>
        <end position="142"/>
    </location>
</feature>
<feature type="sequence conflict" description="In Ref. 2; BAH11196." evidence="2" ref="2">
    <original>L</original>
    <variation>R</variation>
    <location>
        <position position="40"/>
    </location>
</feature>
<feature type="sequence conflict" description="In Ref. 2; BAH11196." evidence="2" ref="2">
    <original>K</original>
    <variation>T</variation>
    <location>
        <position position="54"/>
    </location>
</feature>
<geneLocation type="chloroplast"/>